<evidence type="ECO:0000255" key="1">
    <source>
        <dbReference type="HAMAP-Rule" id="MF_00019"/>
    </source>
</evidence>
<protein>
    <recommendedName>
        <fullName evidence="1">Phosphate acyltransferase</fullName>
        <ecNumber evidence="1">2.3.1.274</ecNumber>
    </recommendedName>
    <alternativeName>
        <fullName evidence="1">Acyl-ACP phosphotransacylase</fullName>
    </alternativeName>
    <alternativeName>
        <fullName evidence="1">Acyl-[acyl-carrier-protein]--phosphate acyltransferase</fullName>
    </alternativeName>
    <alternativeName>
        <fullName evidence="1">Phosphate-acyl-ACP acyltransferase</fullName>
    </alternativeName>
</protein>
<dbReference type="EC" id="2.3.1.274" evidence="1"/>
<dbReference type="EMBL" id="CP000269">
    <property type="protein sequence ID" value="ABR88368.1"/>
    <property type="molecule type" value="Genomic_DNA"/>
</dbReference>
<dbReference type="RefSeq" id="WP_012079212.1">
    <property type="nucleotide sequence ID" value="NC_009659.1"/>
</dbReference>
<dbReference type="SMR" id="A6SXP8"/>
<dbReference type="STRING" id="375286.mma_1355"/>
<dbReference type="KEGG" id="mms:mma_1355"/>
<dbReference type="eggNOG" id="COG0416">
    <property type="taxonomic scope" value="Bacteria"/>
</dbReference>
<dbReference type="HOGENOM" id="CLU_039379_1_0_4"/>
<dbReference type="OrthoDB" id="9806408at2"/>
<dbReference type="UniPathway" id="UPA00085"/>
<dbReference type="Proteomes" id="UP000006388">
    <property type="component" value="Chromosome"/>
</dbReference>
<dbReference type="GO" id="GO:0005737">
    <property type="term" value="C:cytoplasm"/>
    <property type="evidence" value="ECO:0007669"/>
    <property type="project" value="UniProtKB-SubCell"/>
</dbReference>
<dbReference type="GO" id="GO:0043811">
    <property type="term" value="F:phosphate:acyl-[acyl carrier protein] acyltransferase activity"/>
    <property type="evidence" value="ECO:0007669"/>
    <property type="project" value="UniProtKB-UniRule"/>
</dbReference>
<dbReference type="GO" id="GO:0006633">
    <property type="term" value="P:fatty acid biosynthetic process"/>
    <property type="evidence" value="ECO:0007669"/>
    <property type="project" value="UniProtKB-UniRule"/>
</dbReference>
<dbReference type="GO" id="GO:0008654">
    <property type="term" value="P:phospholipid biosynthetic process"/>
    <property type="evidence" value="ECO:0007669"/>
    <property type="project" value="UniProtKB-KW"/>
</dbReference>
<dbReference type="Gene3D" id="3.40.718.10">
    <property type="entry name" value="Isopropylmalate Dehydrogenase"/>
    <property type="match status" value="1"/>
</dbReference>
<dbReference type="HAMAP" id="MF_00019">
    <property type="entry name" value="PlsX"/>
    <property type="match status" value="1"/>
</dbReference>
<dbReference type="InterPro" id="IPR003664">
    <property type="entry name" value="FA_synthesis"/>
</dbReference>
<dbReference type="InterPro" id="IPR012281">
    <property type="entry name" value="Phospholipid_synth_PlsX-like"/>
</dbReference>
<dbReference type="NCBIfam" id="TIGR00182">
    <property type="entry name" value="plsX"/>
    <property type="match status" value="1"/>
</dbReference>
<dbReference type="PANTHER" id="PTHR30100">
    <property type="entry name" value="FATTY ACID/PHOSPHOLIPID SYNTHESIS PROTEIN PLSX"/>
    <property type="match status" value="1"/>
</dbReference>
<dbReference type="PANTHER" id="PTHR30100:SF1">
    <property type="entry name" value="PHOSPHATE ACYLTRANSFERASE"/>
    <property type="match status" value="1"/>
</dbReference>
<dbReference type="Pfam" id="PF02504">
    <property type="entry name" value="FA_synthesis"/>
    <property type="match status" value="1"/>
</dbReference>
<dbReference type="PIRSF" id="PIRSF002465">
    <property type="entry name" value="Phsphlp_syn_PlsX"/>
    <property type="match status" value="1"/>
</dbReference>
<dbReference type="SUPFAM" id="SSF53659">
    <property type="entry name" value="Isocitrate/Isopropylmalate dehydrogenase-like"/>
    <property type="match status" value="1"/>
</dbReference>
<feature type="chain" id="PRO_1000001772" description="Phosphate acyltransferase">
    <location>
        <begin position="1"/>
        <end position="360"/>
    </location>
</feature>
<proteinExistence type="inferred from homology"/>
<accession>A6SXP8</accession>
<sequence>MTIKISIDCMGGDHGPSVTIPAAISFVESEPDAELILVGLEETLLAELKKHKASEHPRLSIVNATEVVTMDDPLEIALRRKKDSSMRVAINLVKQGNADACVSAGNTGALMAISRYVLKTLPGVNRPAICSILPNQKDGPTYMLDLGANVDCEPQHLHQFALMGSALVSAMEGNPRPTVGLLNVGEEDIKGNEVVKQTAVLLRADHELGRLNFYGNVEGNDIFKGTTDIVVCDGFVGNVTLKASEGLGRFVKSVLTTEFKSSPLNMLGALIARGALKAISQRMNPSRYNGGSLLGLRGLVFKSHGGADAYGYQWAIKRAFDAAKYDVLTRISTKIADLMPQSAATPEDSAGAIPNATIEP</sequence>
<keyword id="KW-0963">Cytoplasm</keyword>
<keyword id="KW-0444">Lipid biosynthesis</keyword>
<keyword id="KW-0443">Lipid metabolism</keyword>
<keyword id="KW-0594">Phospholipid biosynthesis</keyword>
<keyword id="KW-1208">Phospholipid metabolism</keyword>
<keyword id="KW-0808">Transferase</keyword>
<comment type="function">
    <text evidence="1">Catalyzes the reversible formation of acyl-phosphate (acyl-PO(4)) from acyl-[acyl-carrier-protein] (acyl-ACP). This enzyme utilizes acyl-ACP as fatty acyl donor, but not acyl-CoA.</text>
</comment>
<comment type="catalytic activity">
    <reaction evidence="1">
        <text>a fatty acyl-[ACP] + phosphate = an acyl phosphate + holo-[ACP]</text>
        <dbReference type="Rhea" id="RHEA:42292"/>
        <dbReference type="Rhea" id="RHEA-COMP:9685"/>
        <dbReference type="Rhea" id="RHEA-COMP:14125"/>
        <dbReference type="ChEBI" id="CHEBI:43474"/>
        <dbReference type="ChEBI" id="CHEBI:59918"/>
        <dbReference type="ChEBI" id="CHEBI:64479"/>
        <dbReference type="ChEBI" id="CHEBI:138651"/>
        <dbReference type="EC" id="2.3.1.274"/>
    </reaction>
</comment>
<comment type="pathway">
    <text evidence="1">Lipid metabolism; phospholipid metabolism.</text>
</comment>
<comment type="subunit">
    <text evidence="1">Homodimer. Probably interacts with PlsY.</text>
</comment>
<comment type="subcellular location">
    <subcellularLocation>
        <location evidence="1">Cytoplasm</location>
    </subcellularLocation>
    <text evidence="1">Associated with the membrane possibly through PlsY.</text>
</comment>
<comment type="similarity">
    <text evidence="1">Belongs to the PlsX family.</text>
</comment>
<name>PLSX_JANMA</name>
<reference key="1">
    <citation type="journal article" date="2007" name="PLoS Genet.">
        <title>Genome analysis of Minibacterium massiliensis highlights the convergent evolution of water-living bacteria.</title>
        <authorList>
            <person name="Audic S."/>
            <person name="Robert C."/>
            <person name="Campagna B."/>
            <person name="Parinello H."/>
            <person name="Claverie J.-M."/>
            <person name="Raoult D."/>
            <person name="Drancourt M."/>
        </authorList>
    </citation>
    <scope>NUCLEOTIDE SEQUENCE [LARGE SCALE GENOMIC DNA]</scope>
    <source>
        <strain>Marseille</strain>
    </source>
</reference>
<organism>
    <name type="scientific">Janthinobacterium sp. (strain Marseille)</name>
    <name type="common">Minibacterium massiliensis</name>
    <dbReference type="NCBI Taxonomy" id="375286"/>
    <lineage>
        <taxon>Bacteria</taxon>
        <taxon>Pseudomonadati</taxon>
        <taxon>Pseudomonadota</taxon>
        <taxon>Betaproteobacteria</taxon>
        <taxon>Burkholderiales</taxon>
        <taxon>Oxalobacteraceae</taxon>
        <taxon>Janthinobacterium</taxon>
    </lineage>
</organism>
<gene>
    <name evidence="1" type="primary">plsX</name>
    <name type="ordered locus">mma_1355</name>
</gene>